<keyword id="KW-0903">Direct protein sequencing</keyword>
<keyword id="KW-0749">Sporulation</keyword>
<keyword id="KW-0800">Toxin</keyword>
<keyword id="KW-0843">Virulence</keyword>
<organism>
    <name type="scientific">Bacillus thuringiensis subsp. tolworthi</name>
    <dbReference type="NCBI Taxonomy" id="1442"/>
    <lineage>
        <taxon>Bacteria</taxon>
        <taxon>Bacillati</taxon>
        <taxon>Bacillota</taxon>
        <taxon>Bacilli</taxon>
        <taxon>Bacillales</taxon>
        <taxon>Bacillaceae</taxon>
        <taxon>Bacillus</taxon>
        <taxon>Bacillus cereus group</taxon>
    </lineage>
</organism>
<proteinExistence type="evidence at protein level"/>
<dbReference type="EMBL" id="Z37527">
    <property type="protein sequence ID" value="CAA85764.1"/>
    <property type="molecule type" value="Genomic_DNA"/>
</dbReference>
<dbReference type="PIR" id="A59350">
    <property type="entry name" value="S49247"/>
</dbReference>
<dbReference type="SMR" id="Q45733"/>
<dbReference type="GO" id="GO:0005102">
    <property type="term" value="F:signaling receptor binding"/>
    <property type="evidence" value="ECO:0007669"/>
    <property type="project" value="InterPro"/>
</dbReference>
<dbReference type="GO" id="GO:0090729">
    <property type="term" value="F:toxin activity"/>
    <property type="evidence" value="ECO:0007669"/>
    <property type="project" value="UniProtKB-KW"/>
</dbReference>
<dbReference type="GO" id="GO:0030435">
    <property type="term" value="P:sporulation resulting in formation of a cellular spore"/>
    <property type="evidence" value="ECO:0007669"/>
    <property type="project" value="UniProtKB-KW"/>
</dbReference>
<dbReference type="GO" id="GO:0001907">
    <property type="term" value="P:symbiont-mediated killing of host cell"/>
    <property type="evidence" value="ECO:0007669"/>
    <property type="project" value="InterPro"/>
</dbReference>
<dbReference type="CDD" id="cd04085">
    <property type="entry name" value="delta_endotoxin_C"/>
    <property type="match status" value="1"/>
</dbReference>
<dbReference type="Gene3D" id="2.60.120.260">
    <property type="entry name" value="Galactose-binding domain-like"/>
    <property type="match status" value="2"/>
</dbReference>
<dbReference type="Gene3D" id="2.100.10.10">
    <property type="entry name" value="Pesticidal crystal protein, central domain"/>
    <property type="match status" value="1"/>
</dbReference>
<dbReference type="Gene3D" id="1.20.190.10">
    <property type="entry name" value="Pesticidal crystal protein, N-terminal domain"/>
    <property type="match status" value="1"/>
</dbReference>
<dbReference type="InterPro" id="IPR048645">
    <property type="entry name" value="Cry1Ac-like_dom-VII"/>
</dbReference>
<dbReference type="InterPro" id="IPR041587">
    <property type="entry name" value="Cry_V"/>
</dbReference>
<dbReference type="InterPro" id="IPR008979">
    <property type="entry name" value="Galactose-bd-like_sf"/>
</dbReference>
<dbReference type="InterPro" id="IPR038979">
    <property type="entry name" value="Pest_crys"/>
</dbReference>
<dbReference type="InterPro" id="IPR005638">
    <property type="entry name" value="Pest_crys_dom-III"/>
</dbReference>
<dbReference type="InterPro" id="IPR005639">
    <property type="entry name" value="Pest_crys_dom_I"/>
</dbReference>
<dbReference type="InterPro" id="IPR036716">
    <property type="entry name" value="Pest_crys_N_sf"/>
</dbReference>
<dbReference type="InterPro" id="IPR036399">
    <property type="entry name" value="Pest_cryst_cen_dom_sf"/>
</dbReference>
<dbReference type="InterPro" id="IPR001178">
    <property type="entry name" value="Pest_cryst_dom_II"/>
</dbReference>
<dbReference type="PANTHER" id="PTHR37003">
    <property type="entry name" value="ENDOTOXIN_N DOMAIN-CONTAINING PROTEIN-RELATED"/>
    <property type="match status" value="1"/>
</dbReference>
<dbReference type="PANTHER" id="PTHR37003:SF2">
    <property type="entry name" value="PESTICIDAL CRYSTAL PROTEIN N-TERMINAL DOMAIN-CONTAINING PROTEIN"/>
    <property type="match status" value="1"/>
</dbReference>
<dbReference type="Pfam" id="PF17997">
    <property type="entry name" value="Cry1Ac_D5"/>
    <property type="match status" value="1"/>
</dbReference>
<dbReference type="Pfam" id="PF21463">
    <property type="entry name" value="Cry1Ac_dom-VII"/>
    <property type="match status" value="1"/>
</dbReference>
<dbReference type="Pfam" id="PF03944">
    <property type="entry name" value="Endotoxin_C"/>
    <property type="match status" value="1"/>
</dbReference>
<dbReference type="Pfam" id="PF00555">
    <property type="entry name" value="Endotoxin_M"/>
    <property type="match status" value="1"/>
</dbReference>
<dbReference type="Pfam" id="PF03945">
    <property type="entry name" value="Endotoxin_N"/>
    <property type="match status" value="1"/>
</dbReference>
<dbReference type="SUPFAM" id="SSF51096">
    <property type="entry name" value="delta-Endotoxin (insectocide), middle domain"/>
    <property type="match status" value="1"/>
</dbReference>
<dbReference type="SUPFAM" id="SSF56849">
    <property type="entry name" value="delta-Endotoxin (insectocide), N-terminal domain"/>
    <property type="match status" value="1"/>
</dbReference>
<dbReference type="SUPFAM" id="SSF49785">
    <property type="entry name" value="Galactose-binding domain-like"/>
    <property type="match status" value="2"/>
</dbReference>
<comment type="function">
    <text>Promotes colloidosmotic lysis by binding to the midgut epithelial cells of Lepidoptera larvae. Has a fairly broad spectrum of activity against members of the Pyralidae, Plutellidae, Sphingidae and Noctuidae families. It was the first insecticidal crystal protein characterized with activity against cutworms. No activity is observed against some beetles, such as the Colorado potato beetle.</text>
</comment>
<comment type="developmental stage">
    <text>The crystal protein is produced during sporulation and is accumulated both as an inclusion and as part of the spore coat.</text>
</comment>
<comment type="miscellaneous">
    <text>Toxic segment of the protein is located in the N-terminus.</text>
</comment>
<comment type="similarity">
    <text evidence="1">Belongs to the delta endotoxin family.</text>
</comment>
<evidence type="ECO:0000305" key="1"/>
<gene>
    <name type="primary">cry9Ca</name>
    <name type="synonym">cryIXC(a)</name>
</gene>
<sequence length="1157" mass="129776">MNRNNQNEYEIIDAPHCGCPSDDDVRYPLASDPNAALQNMNYKDYLQMTDEDYTDSYINPSLSISGRDAVQTALTVVGRILGALGVPFSGQIVSFYQFLLNTLWPVNDTAIWEAFMRQVEELVNQQITEFARNQALARLQGLGDSFNVYQRSLQNWLADRNDTRNLSVVRAQFIALDLDFVNAIPLFAVNGQQVPLLSVYAQAVNLHLLLLKDASLFGEGWGFTQGEISTYYDRQLELTAKYTNYCETWYNTGLDRLRGTNTESWLRYHQFRREMTLVVLDVVALFPYYDVRLYPTGSNPQLTREVYTDPIVFNPPANVGLCRRWGTNPYNTFSELENAFIRPPHLFDRLNSLTISSNRFPVSSNFMDYWSGHTLRRSYLNDSAVQEDSYGLITTTRATINPGVDGTNRIESTAVDFRSALIGIYGVNRASFVPGGLFNGTTSPANGGCRDLYDTNDELPPDESTGSSTHRLSHVTFFSFQTNQAGSIANAGSVPTYVWTRRDVDLNNTITPNRITQLPLVKASAPVSGTTVLKGPGFTGGGILRRTTNGTFGTLRVTVNSPLTQQYRLRVRFASTGNFSIRVLRGGVSIGDVRLGSTMNRGQELTYESFFTREFTTTGPFNPPFTFTQAQEILTVNAEGVSTGGEYYIDRIEIVPVNPAREAEEDLEAAKKAVASLFTRTRDGLQVNVTDYQVDQAANLVSCLSDEQYGHDKKMLLEAVRAAKRLSRERNLLQDPDFNTINSTEENGWKASNGVTISEGGPFFKGRALQLASARENYPTYIYQKVDASVLKPYTRYRLDGFVKSSQDLEIDLIHHHKVHLVKNVPDNLVSDTYSDGSCSGINRCDEQHQVDMQLDAEHHPMDCCEAAQTHEFSSYINTGDLNASVDQGIWVVLKVRTTDGYATLGNLELVEVGPLSGESLEREQRDNAKWNAELGRKRAEIDRVYLAAKQAINHLFVDYQDQQLNPEIGLAEINEASNLVESISGVYSDTLLQIPGINYEIYTELSDRLQQASYLYTSRNAVQNGDFNSGLDSWNTTMDASVQQDGNMHFLVLSHWDAQVSQQLRVNPNCKYVLRVTARKVGGGDGYVTIRDGAHHQETLTFNACDYDVNGTYVNDNSYITEEVVFYPETKHMWVEVSESEGSFYIDSIEFIETQE</sequence>
<accession>Q45733</accession>
<reference key="1">
    <citation type="journal article" date="1996" name="Appl. Environ. Microbiol.">
        <title>A Bacillus thuringiensis insecticidal crystal protein with a high activity against members of the family Noctuidae.</title>
        <authorList>
            <person name="Lambert B."/>
            <person name="Buysse L."/>
            <person name="Decock C."/>
            <person name="Jansens S."/>
            <person name="Piens C."/>
            <person name="Saey B."/>
            <person name="Seurinck J."/>
            <person name="van Audenhove K."/>
            <person name="van Rie J."/>
            <person name="van Vliet A."/>
            <person name="Peferoen M."/>
        </authorList>
    </citation>
    <scope>NUCLEOTIDE SEQUENCE [GENOMIC DNA]</scope>
    <scope>PARTIAL PROTEIN SEQUENCE</scope>
    <source>
        <strain>BTS02618A</strain>
    </source>
</reference>
<feature type="chain" id="PRO_0000174078" description="Pesticidal crystal protein Cry9Ca">
    <location>
        <begin position="1"/>
        <end position="1157"/>
    </location>
</feature>
<name>CR9CA_BACTO</name>
<protein>
    <recommendedName>
        <fullName>Pesticidal crystal protein Cry9Ca</fullName>
    </recommendedName>
    <alternativeName>
        <fullName>130 kDa crystal protein</fullName>
    </alternativeName>
    <alternativeName>
        <fullName>Crystaline entomocidal protoxin</fullName>
    </alternativeName>
    <alternativeName>
        <fullName>Insecticidal delta-endotoxin CryIXC(a)</fullName>
    </alternativeName>
</protein>